<organismHost>
    <name type="scientific">Homo sapiens</name>
    <name type="common">Human</name>
    <dbReference type="NCBI Taxonomy" id="9606"/>
</organismHost>
<proteinExistence type="inferred from homology"/>
<reference key="1">
    <citation type="journal article" date="1991" name="Virology">
        <title>Sequence and crystallization of influenza virus B/Beijing/1/87 neuraminidase.</title>
        <authorList>
            <person name="Burmeister W.P."/>
            <person name="Daniels R.S."/>
            <person name="Dayan S."/>
            <person name="Gagnon J."/>
            <person name="Cusack S."/>
            <person name="Ruigrok R.W."/>
        </authorList>
    </citation>
    <scope>NUCLEOTIDE SEQUENCE [GENOMIC RNA]</scope>
</reference>
<gene>
    <name type="primary">NB</name>
</gene>
<evidence type="ECO:0000250" key="1"/>
<evidence type="ECO:0000255" key="2"/>
<evidence type="ECO:0000305" key="3"/>
<comment type="function">
    <text evidence="1">Putative viral proton channel. May play a role in virus entry (By similarity).</text>
</comment>
<comment type="subunit">
    <text evidence="1">Dimer.</text>
</comment>
<comment type="subcellular location">
    <subcellularLocation>
        <location evidence="3">Virion membrane</location>
        <topology evidence="3">Single-pass type III membrane protein</topology>
    </subcellularLocation>
</comment>
<comment type="similarity">
    <text evidence="3">Belongs to the influenza viruses type B glycoprotein NB family.</text>
</comment>
<accession>P27908</accession>
<protein>
    <recommendedName>
        <fullName>Glycoprotein NB</fullName>
    </recommendedName>
</protein>
<name>VNB_INBBE</name>
<keyword id="KW-0325">Glycoprotein</keyword>
<keyword id="KW-0375">Hydrogen ion transport</keyword>
<keyword id="KW-0407">Ion channel</keyword>
<keyword id="KW-0406">Ion transport</keyword>
<keyword id="KW-0472">Membrane</keyword>
<keyword id="KW-0735">Signal-anchor</keyword>
<keyword id="KW-0812">Transmembrane</keyword>
<keyword id="KW-1133">Transmembrane helix</keyword>
<keyword id="KW-0813">Transport</keyword>
<keyword id="KW-1182">Viral ion channel</keyword>
<keyword id="KW-0946">Virion</keyword>
<feature type="chain" id="PRO_0000078904" description="Glycoprotein NB">
    <location>
        <begin position="1"/>
        <end position="99"/>
    </location>
</feature>
<feature type="topological domain" description="Virion surface" evidence="2">
    <location>
        <begin position="1"/>
        <end position="18"/>
    </location>
</feature>
<feature type="transmembrane region" description="Helical; Signal-anchor for type III membrane protein" evidence="2">
    <location>
        <begin position="19"/>
        <end position="40"/>
    </location>
</feature>
<feature type="topological domain" description="Intravirion" evidence="2">
    <location>
        <begin position="41"/>
        <end position="99"/>
    </location>
</feature>
<feature type="glycosylation site" description="N-linked (GlcNAc...) asparagine; by host" evidence="2">
    <location>
        <position position="3"/>
    </location>
</feature>
<feature type="glycosylation site" description="N-linked (GlcNAc...) asparagine; by host" evidence="2">
    <location>
        <position position="7"/>
    </location>
</feature>
<organism>
    <name type="scientific">Influenza B virus (strain B/Beijing/1/1987)</name>
    <dbReference type="NCBI Taxonomy" id="11525"/>
    <lineage>
        <taxon>Viruses</taxon>
        <taxon>Riboviria</taxon>
        <taxon>Orthornavirae</taxon>
        <taxon>Negarnaviricota</taxon>
        <taxon>Polyploviricotina</taxon>
        <taxon>Insthoviricetes</taxon>
        <taxon>Articulavirales</taxon>
        <taxon>Orthomyxoviridae</taxon>
        <taxon>Betainfluenzavirus</taxon>
        <taxon>Betainfluenzavirus influenzae</taxon>
        <taxon>Influenza B virus</taxon>
    </lineage>
</organism>
<sequence>MNNATFNYTNVNPISHIRGSVIITICVSFTVILTVFGYIAKIFIKNNCTNNDIGLRERIKCSGCEPLCNKRDDISSPRTGVDIPSFILPGLNLSESTPN</sequence>
<dbReference type="EMBL" id="M54967">
    <property type="protein sequence ID" value="AAA43732.1"/>
    <property type="molecule type" value="Genomic_RNA"/>
</dbReference>
<dbReference type="PIR" id="A38520">
    <property type="entry name" value="VGIVB1"/>
</dbReference>
<dbReference type="GlyCosmos" id="P27908">
    <property type="glycosylation" value="2 sites, No reported glycans"/>
</dbReference>
<dbReference type="GO" id="GO:0033644">
    <property type="term" value="C:host cell membrane"/>
    <property type="evidence" value="ECO:0007669"/>
    <property type="project" value="UniProtKB-KW"/>
</dbReference>
<dbReference type="GO" id="GO:0016020">
    <property type="term" value="C:membrane"/>
    <property type="evidence" value="ECO:0007669"/>
    <property type="project" value="UniProtKB-KW"/>
</dbReference>
<dbReference type="GO" id="GO:0055036">
    <property type="term" value="C:virion membrane"/>
    <property type="evidence" value="ECO:0007669"/>
    <property type="project" value="UniProtKB-SubCell"/>
</dbReference>
<dbReference type="GO" id="GO:0015267">
    <property type="term" value="F:channel activity"/>
    <property type="evidence" value="ECO:0007669"/>
    <property type="project" value="UniProtKB-KW"/>
</dbReference>
<dbReference type="GO" id="GO:1902600">
    <property type="term" value="P:proton transmembrane transport"/>
    <property type="evidence" value="ECO:0007669"/>
    <property type="project" value="UniProtKB-KW"/>
</dbReference>
<dbReference type="InterPro" id="IPR007288">
    <property type="entry name" value="InfluenzaB_glycoprotein_NB"/>
</dbReference>
<dbReference type="Pfam" id="PF04159">
    <property type="entry name" value="NB"/>
    <property type="match status" value="1"/>
</dbReference>